<comment type="function">
    <text evidence="4 5">Transcriptional coactivator of POU2F3 (PubMed:35576971, PubMed:36197978). This complex drives the development of tuft cells, a rare chemosensory cells that coordinate immune and neural functions within mucosal epithelial tissues (PubMed:35576971).</text>
</comment>
<comment type="subunit">
    <text evidence="4 5">Interacts with POU2F3 (via the POU domain) in a DNA-dependent manner; this interaction recruits POU2AF2 to chromatin and increases POU2F3 transactivation activity.</text>
</comment>
<comment type="subcellular location">
    <subcellularLocation>
        <location evidence="5">Cytoplasm</location>
        <location evidence="5">Cytosol</location>
    </subcellularLocation>
    <subcellularLocation>
        <location evidence="4 5">Nucleus</location>
    </subcellularLocation>
    <text evidence="5">Recruited to chromatin by POU2F3.</text>
</comment>
<comment type="tissue specificity">
    <text evidence="3 4">Expressed in tuft cells of colon mucosa, as well as in small intestine and thymus (PubMed:35576971).</text>
</comment>
<comment type="domain">
    <text evidence="4">In the N-terminus, possesses a conserved OCA domain for bivalent binding to class II POU domain-containing transcription factors and to an octamer DNA motif (5'-ATGAAAT-3').</text>
</comment>
<comment type="similarity">
    <text evidence="8">Belongs to the POU2AF family.</text>
</comment>
<comment type="sequence caution" evidence="8">
    <conflict type="erroneous initiation">
        <sequence resource="EMBL-CDS" id="AAH39669"/>
    </conflict>
    <text>Truncated N-terminus.</text>
</comment>
<proteinExistence type="evidence at protein level"/>
<evidence type="ECO:0000255" key="1">
    <source>
        <dbReference type="PROSITE-ProRule" id="PRU01347"/>
    </source>
</evidence>
<evidence type="ECO:0000256" key="2">
    <source>
        <dbReference type="SAM" id="MobiDB-lite"/>
    </source>
</evidence>
<evidence type="ECO:0000269" key="3">
    <source>
    </source>
</evidence>
<evidence type="ECO:0000269" key="4">
    <source>
    </source>
</evidence>
<evidence type="ECO:0000269" key="5">
    <source>
    </source>
</evidence>
<evidence type="ECO:0000303" key="6">
    <source>
    </source>
</evidence>
<evidence type="ECO:0000303" key="7">
    <source>
    </source>
</evidence>
<evidence type="ECO:0000305" key="8"/>
<evidence type="ECO:0000312" key="9">
    <source>
        <dbReference type="HGNC" id="HGNC:30527"/>
    </source>
</evidence>
<dbReference type="EMBL" id="AP002448">
    <property type="status" value="NOT_ANNOTATED_CDS"/>
    <property type="molecule type" value="Genomic_DNA"/>
</dbReference>
<dbReference type="EMBL" id="BC039669">
    <property type="protein sequence ID" value="AAH39669.1"/>
    <property type="status" value="ALT_INIT"/>
    <property type="molecule type" value="mRNA"/>
</dbReference>
<dbReference type="CCDS" id="CCDS31674.2"/>
<dbReference type="RefSeq" id="NP_940900.2">
    <property type="nucleotide sequence ID" value="NM_198498.3"/>
</dbReference>
<dbReference type="RefSeq" id="XP_011541105.1">
    <property type="nucleotide sequence ID" value="XM_011542803.2"/>
</dbReference>
<dbReference type="RefSeq" id="XP_011541106.1">
    <property type="nucleotide sequence ID" value="XM_011542804.2"/>
</dbReference>
<dbReference type="SMR" id="Q8IXP5"/>
<dbReference type="BioGRID" id="131113">
    <property type="interactions" value="6"/>
</dbReference>
<dbReference type="FunCoup" id="Q8IXP5">
    <property type="interactions" value="52"/>
</dbReference>
<dbReference type="IntAct" id="Q8IXP5">
    <property type="interactions" value="3"/>
</dbReference>
<dbReference type="MINT" id="Q8IXP5"/>
<dbReference type="STRING" id="9606.ENSP00000489630"/>
<dbReference type="GlyGen" id="Q8IXP5">
    <property type="glycosylation" value="1 site"/>
</dbReference>
<dbReference type="iPTMnet" id="Q8IXP5"/>
<dbReference type="PhosphoSitePlus" id="Q8IXP5"/>
<dbReference type="BioMuta" id="C11orf53"/>
<dbReference type="DMDM" id="74728218"/>
<dbReference type="PaxDb" id="9606-ENSP00000280325"/>
<dbReference type="PeptideAtlas" id="Q8IXP5"/>
<dbReference type="Antibodypedia" id="45588">
    <property type="antibodies" value="129 antibodies from 18 providers"/>
</dbReference>
<dbReference type="DNASU" id="341032"/>
<dbReference type="Ensembl" id="ENST00000280325.7">
    <property type="protein sequence ID" value="ENSP00000280325.6"/>
    <property type="gene ID" value="ENSG00000150750.9"/>
</dbReference>
<dbReference type="GeneID" id="341032"/>
<dbReference type="KEGG" id="hsa:341032"/>
<dbReference type="MANE-Select" id="ENST00000280325.7">
    <property type="protein sequence ID" value="ENSP00000280325.6"/>
    <property type="RefSeq nucleotide sequence ID" value="NM_198498.3"/>
    <property type="RefSeq protein sequence ID" value="NP_940900.2"/>
</dbReference>
<dbReference type="UCSC" id="uc001plc.4">
    <property type="organism name" value="human"/>
</dbReference>
<dbReference type="AGR" id="HGNC:30527"/>
<dbReference type="CTD" id="341032"/>
<dbReference type="DisGeNET" id="341032"/>
<dbReference type="GeneCards" id="POU2AF2"/>
<dbReference type="HGNC" id="HGNC:30527">
    <property type="gene designation" value="POU2AF2"/>
</dbReference>
<dbReference type="HPA" id="ENSG00000150750">
    <property type="expression patterns" value="Tissue enhanced (stomach, testis)"/>
</dbReference>
<dbReference type="MIM" id="620671">
    <property type="type" value="gene"/>
</dbReference>
<dbReference type="neXtProt" id="NX_Q8IXP5"/>
<dbReference type="OpenTargets" id="ENSG00000150750"/>
<dbReference type="PharmGKB" id="PA143485348"/>
<dbReference type="VEuPathDB" id="HostDB:ENSG00000150750"/>
<dbReference type="eggNOG" id="ENOG502RC2Q">
    <property type="taxonomic scope" value="Eukaryota"/>
</dbReference>
<dbReference type="GeneTree" id="ENSGT00390000000586"/>
<dbReference type="HOGENOM" id="CLU_086232_0_0_1"/>
<dbReference type="InParanoid" id="Q8IXP5"/>
<dbReference type="OMA" id="QHRSSGW"/>
<dbReference type="OrthoDB" id="9892004at2759"/>
<dbReference type="PAN-GO" id="Q8IXP5">
    <property type="GO annotations" value="0 GO annotations based on evolutionary models"/>
</dbReference>
<dbReference type="PhylomeDB" id="Q8IXP5"/>
<dbReference type="TreeFam" id="TF332345"/>
<dbReference type="PathwayCommons" id="Q8IXP5"/>
<dbReference type="SignaLink" id="Q8IXP5"/>
<dbReference type="BioGRID-ORCS" id="341032">
    <property type="hits" value="15 hits in 1117 CRISPR screens"/>
</dbReference>
<dbReference type="GenomeRNAi" id="341032"/>
<dbReference type="Pharos" id="Q8IXP5">
    <property type="development level" value="Tdark"/>
</dbReference>
<dbReference type="PRO" id="PR:Q8IXP5"/>
<dbReference type="Proteomes" id="UP000005640">
    <property type="component" value="Chromosome 11"/>
</dbReference>
<dbReference type="RNAct" id="Q8IXP5">
    <property type="molecule type" value="protein"/>
</dbReference>
<dbReference type="Bgee" id="ENSG00000150750">
    <property type="expression patterns" value="Expressed in male germ line stem cell (sensu Vertebrata) in testis and 66 other cell types or tissues"/>
</dbReference>
<dbReference type="ExpressionAtlas" id="Q8IXP5">
    <property type="expression patterns" value="baseline and differential"/>
</dbReference>
<dbReference type="GO" id="GO:0005829">
    <property type="term" value="C:cytosol"/>
    <property type="evidence" value="ECO:0007669"/>
    <property type="project" value="UniProtKB-SubCell"/>
</dbReference>
<dbReference type="GO" id="GO:0005634">
    <property type="term" value="C:nucleus"/>
    <property type="evidence" value="ECO:0000314"/>
    <property type="project" value="UniProtKB"/>
</dbReference>
<dbReference type="GO" id="GO:0070974">
    <property type="term" value="F:POU domain binding"/>
    <property type="evidence" value="ECO:0007669"/>
    <property type="project" value="InterPro"/>
</dbReference>
<dbReference type="GO" id="GO:0043565">
    <property type="term" value="F:sequence-specific DNA binding"/>
    <property type="evidence" value="ECO:0000314"/>
    <property type="project" value="UniProtKB"/>
</dbReference>
<dbReference type="GO" id="GO:0003713">
    <property type="term" value="F:transcription coactivator activity"/>
    <property type="evidence" value="ECO:0000314"/>
    <property type="project" value="UniProtKB"/>
</dbReference>
<dbReference type="InterPro" id="IPR047571">
    <property type="entry name" value="OCA"/>
</dbReference>
<dbReference type="InterPro" id="IPR037655">
    <property type="entry name" value="POU2AF2"/>
</dbReference>
<dbReference type="PANTHER" id="PTHR28376:SF1">
    <property type="entry name" value="POU DOMAIN CLASS 2-ASSOCIATING FACTOR 2"/>
    <property type="match status" value="1"/>
</dbReference>
<dbReference type="PANTHER" id="PTHR28376">
    <property type="entry name" value="RGD1562914"/>
    <property type="match status" value="1"/>
</dbReference>
<dbReference type="Pfam" id="PF17721">
    <property type="entry name" value="POU2AF2"/>
    <property type="match status" value="1"/>
</dbReference>
<dbReference type="PROSITE" id="PS52003">
    <property type="entry name" value="OCA"/>
    <property type="match status" value="1"/>
</dbReference>
<organism>
    <name type="scientific">Homo sapiens</name>
    <name type="common">Human</name>
    <dbReference type="NCBI Taxonomy" id="9606"/>
    <lineage>
        <taxon>Eukaryota</taxon>
        <taxon>Metazoa</taxon>
        <taxon>Chordata</taxon>
        <taxon>Craniata</taxon>
        <taxon>Vertebrata</taxon>
        <taxon>Euteleostomi</taxon>
        <taxon>Mammalia</taxon>
        <taxon>Eutheria</taxon>
        <taxon>Euarchontoglires</taxon>
        <taxon>Primates</taxon>
        <taxon>Haplorrhini</taxon>
        <taxon>Catarrhini</taxon>
        <taxon>Hominidae</taxon>
        <taxon>Homo</taxon>
    </lineage>
</organism>
<name>OCAT1_HUMAN</name>
<sequence>MESVPGDYSKRVYQGVRVKHTVKDLLAEKRSGQTSNSRLNGSVSSSQSPFVQMPGSPVTSGYYGVRRSFLSDSDFHNSKQFSNDVYTSSVGKPFPCESSAGQSHAALLEPYFPQEPYGDYRPPALTPNAGSLFSASPLPPLLPPPFPGDPAHFLFRDSWEQTLPDGLSQPDPVSADALLTLPPSTSCLSQLESGSIAQHRGSSWGSSLAGAQSYSLHALEDLHHTPGYPTPPPYPFTPFMTVSNDLPPKVGPLSPDEEADTGSLHDPSPWVKEDGSIAWGSYECRRAY</sequence>
<feature type="chain" id="PRO_0000263611" description="POU domain class 2-associating factor 2">
    <location>
        <begin position="1"/>
        <end position="288"/>
    </location>
</feature>
<feature type="domain" description="OCA" evidence="1 4">
    <location>
        <begin position="10"/>
        <end position="32"/>
    </location>
</feature>
<feature type="region of interest" description="Disordered" evidence="2">
    <location>
        <begin position="24"/>
        <end position="52"/>
    </location>
</feature>
<feature type="region of interest" description="Disordered" evidence="2">
    <location>
        <begin position="247"/>
        <end position="274"/>
    </location>
</feature>
<feature type="compositionally biased region" description="Low complexity" evidence="2">
    <location>
        <begin position="35"/>
        <end position="48"/>
    </location>
</feature>
<feature type="mutagenesis site" description="Abolishes interaction with POU2F3." evidence="4">
    <original>V</original>
    <variation>D</variation>
    <location>
        <position position="16"/>
    </location>
</feature>
<feature type="mutagenesis site" description="Abolishes interaction with POU2F3." evidence="4">
    <original>V</original>
    <variation>E</variation>
    <location>
        <position position="22"/>
    </location>
</feature>
<gene>
    <name evidence="6 7 9" type="primary">POU2AF2</name>
    <name type="synonym">C11orf53</name>
</gene>
<accession>Q8IXP5</accession>
<accession>A0A1C7CYV6</accession>
<reference key="1">
    <citation type="journal article" date="2006" name="Nature">
        <title>Human chromosome 11 DNA sequence and analysis including novel gene identification.</title>
        <authorList>
            <person name="Taylor T.D."/>
            <person name="Noguchi H."/>
            <person name="Totoki Y."/>
            <person name="Toyoda A."/>
            <person name="Kuroki Y."/>
            <person name="Dewar K."/>
            <person name="Lloyd C."/>
            <person name="Itoh T."/>
            <person name="Takeda T."/>
            <person name="Kim D.-W."/>
            <person name="She X."/>
            <person name="Barlow K.F."/>
            <person name="Bloom T."/>
            <person name="Bruford E."/>
            <person name="Chang J.L."/>
            <person name="Cuomo C.A."/>
            <person name="Eichler E."/>
            <person name="FitzGerald M.G."/>
            <person name="Jaffe D.B."/>
            <person name="LaButti K."/>
            <person name="Nicol R."/>
            <person name="Park H.-S."/>
            <person name="Seaman C."/>
            <person name="Sougnez C."/>
            <person name="Yang X."/>
            <person name="Zimmer A.R."/>
            <person name="Zody M.C."/>
            <person name="Birren B.W."/>
            <person name="Nusbaum C."/>
            <person name="Fujiyama A."/>
            <person name="Hattori M."/>
            <person name="Rogers J."/>
            <person name="Lander E.S."/>
            <person name="Sakaki Y."/>
        </authorList>
    </citation>
    <scope>NUCLEOTIDE SEQUENCE [LARGE SCALE GENOMIC DNA]</scope>
</reference>
<reference key="2">
    <citation type="journal article" date="2004" name="Genome Res.">
        <title>The status, quality, and expansion of the NIH full-length cDNA project: the Mammalian Gene Collection (MGC).</title>
        <authorList>
            <consortium name="The MGC Project Team"/>
        </authorList>
    </citation>
    <scope>NUCLEOTIDE SEQUENCE [LARGE SCALE MRNA] OF 3-288</scope>
    <source>
        <tissue>Brain</tissue>
    </source>
</reference>
<reference key="3">
    <citation type="journal article" date="2014" name="Cancer Genomics Proteomics">
        <title>Open reading frames associated with cancer in the dark matter of the human genome.</title>
        <authorList>
            <person name="Delgado A.P."/>
            <person name="Brandao P."/>
            <person name="Chapado M.J."/>
            <person name="Hamid S."/>
            <person name="Narayanan R."/>
        </authorList>
    </citation>
    <scope>TISSUE SPECIFICITY</scope>
</reference>
<reference key="4">
    <citation type="journal article" date="2022" name="Nature">
        <title>OCA-T1 and OCA-T2 are coactivators of POU2F3 in the tuft cell lineage.</title>
        <authorList>
            <person name="Wu X.S."/>
            <person name="He X.Y."/>
            <person name="Ipsaro J.J."/>
            <person name="Huang Y.H."/>
            <person name="Preall J.B."/>
            <person name="Ng D."/>
            <person name="Shue Y.T."/>
            <person name="Sage J."/>
            <person name="Egeblad M."/>
            <person name="Joshua-Tor L."/>
            <person name="Vakoc C.R."/>
        </authorList>
    </citation>
    <scope>FUNCTION</scope>
    <scope>SUBCELLULAR LOCATION</scope>
    <scope>INTERACTION WITH POU2F3</scope>
    <scope>TISSUE SPECIFICITY</scope>
    <scope>MUTAGENESIS OF VAL-16 AND VAL-22</scope>
    <scope>OCA DOMAIN</scope>
</reference>
<reference key="5">
    <citation type="journal article" date="2022" name="Sci. Adv.">
        <title>POU2AF2/C11orf53 functions as a coactivator of POU2F3 by maintaining chromatin accessibility and enhancer activity.</title>
        <authorList>
            <person name="Szczepanski A.P."/>
            <person name="Tsuboyama N."/>
            <person name="Watanabe J."/>
            <person name="Hashizume R."/>
            <person name="Zhao Z."/>
            <person name="Wang L."/>
        </authorList>
    </citation>
    <scope>FUNCTION</scope>
    <scope>SUBCELLULAR LOCATION</scope>
    <scope>INTERACTION WITH POU2F3</scope>
</reference>
<keyword id="KW-0010">Activator</keyword>
<keyword id="KW-0963">Cytoplasm</keyword>
<keyword id="KW-0539">Nucleus</keyword>
<keyword id="KW-1185">Reference proteome</keyword>
<keyword id="KW-0804">Transcription</keyword>
<keyword id="KW-0805">Transcription regulation</keyword>
<protein>
    <recommendedName>
        <fullName evidence="8">POU domain class 2-associating factor 2</fullName>
    </recommendedName>
    <alternativeName>
        <fullName evidence="6">Oct coactivator from tuft cells 1</fullName>
        <shortName evidence="6">Protein OCA-T1</shortName>
    </alternativeName>
    <alternativeName>
        <fullName evidence="6 7">POU class 2 homeobox-associating factor 2</fullName>
    </alternativeName>
</protein>